<proteinExistence type="evidence at transcript level"/>
<feature type="chain" id="PRO_0000376993" description="B3 domain-containing protein Os12g0591400">
    <location>
        <begin position="1"/>
        <end position="661"/>
    </location>
</feature>
<feature type="DNA-binding region" description="TF-B3 1" evidence="1">
    <location>
        <begin position="2"/>
        <end position="95"/>
    </location>
</feature>
<feature type="DNA-binding region" description="TF-B3 2" evidence="1">
    <location>
        <begin position="197"/>
        <end position="290"/>
    </location>
</feature>
<feature type="DNA-binding region" description="TF-B3 3" evidence="1">
    <location>
        <begin position="437"/>
        <end position="535"/>
    </location>
</feature>
<feature type="DNA-binding region" description="TF-B3 4" evidence="1">
    <location>
        <begin position="562"/>
        <end position="658"/>
    </location>
</feature>
<comment type="subcellular location">
    <subcellularLocation>
        <location evidence="1">Nucleus</location>
    </subcellularLocation>
</comment>
<gene>
    <name type="ordered locus">Os12g0591300</name>
    <name type="ordered locus">LOC_Os12g40070</name>
</gene>
<keyword id="KW-0238">DNA-binding</keyword>
<keyword id="KW-0539">Nucleus</keyword>
<keyword id="KW-1185">Reference proteome</keyword>
<keyword id="KW-0677">Repeat</keyword>
<keyword id="KW-0804">Transcription</keyword>
<keyword id="KW-0805">Transcription regulation</keyword>
<name>Y1214_ORYSJ</name>
<evidence type="ECO:0000255" key="1">
    <source>
        <dbReference type="PROSITE-ProRule" id="PRU00326"/>
    </source>
</evidence>
<protein>
    <recommendedName>
        <fullName>B3 domain-containing protein Os12g0591400</fullName>
    </recommendedName>
</protein>
<organism>
    <name type="scientific">Oryza sativa subsp. japonica</name>
    <name type="common">Rice</name>
    <dbReference type="NCBI Taxonomy" id="39947"/>
    <lineage>
        <taxon>Eukaryota</taxon>
        <taxon>Viridiplantae</taxon>
        <taxon>Streptophyta</taxon>
        <taxon>Embryophyta</taxon>
        <taxon>Tracheophyta</taxon>
        <taxon>Spermatophyta</taxon>
        <taxon>Magnoliopsida</taxon>
        <taxon>Liliopsida</taxon>
        <taxon>Poales</taxon>
        <taxon>Poaceae</taxon>
        <taxon>BOP clade</taxon>
        <taxon>Oryzoideae</taxon>
        <taxon>Oryzeae</taxon>
        <taxon>Oryzinae</taxon>
        <taxon>Oryza</taxon>
        <taxon>Oryza sativa</taxon>
    </lineage>
</organism>
<dbReference type="EMBL" id="DP000011">
    <property type="protein sequence ID" value="ABA99154.1"/>
    <property type="molecule type" value="Genomic_DNA"/>
</dbReference>
<dbReference type="EMBL" id="AP008218">
    <property type="status" value="NOT_ANNOTATED_CDS"/>
    <property type="molecule type" value="Genomic_DNA"/>
</dbReference>
<dbReference type="EMBL" id="AP014968">
    <property type="status" value="NOT_ANNOTATED_CDS"/>
    <property type="molecule type" value="Genomic_DNA"/>
</dbReference>
<dbReference type="SMR" id="Q2QMT7"/>
<dbReference type="STRING" id="39947.Q2QMT7"/>
<dbReference type="PaxDb" id="39947-Q2QMT7"/>
<dbReference type="eggNOG" id="ENOG502S27N">
    <property type="taxonomic scope" value="Eukaryota"/>
</dbReference>
<dbReference type="InParanoid" id="Q2QMT7"/>
<dbReference type="Proteomes" id="UP000000763">
    <property type="component" value="Chromosome 12"/>
</dbReference>
<dbReference type="Proteomes" id="UP000059680">
    <property type="component" value="Chromosome 12"/>
</dbReference>
<dbReference type="GO" id="GO:0005634">
    <property type="term" value="C:nucleus"/>
    <property type="evidence" value="ECO:0007669"/>
    <property type="project" value="UniProtKB-SubCell"/>
</dbReference>
<dbReference type="GO" id="GO:0003677">
    <property type="term" value="F:DNA binding"/>
    <property type="evidence" value="ECO:0007669"/>
    <property type="project" value="UniProtKB-KW"/>
</dbReference>
<dbReference type="CDD" id="cd10017">
    <property type="entry name" value="B3_DNA"/>
    <property type="match status" value="4"/>
</dbReference>
<dbReference type="Gene3D" id="2.40.330.10">
    <property type="entry name" value="DNA-binding pseudobarrel domain"/>
    <property type="match status" value="4"/>
</dbReference>
<dbReference type="InterPro" id="IPR003340">
    <property type="entry name" value="B3_DNA-bd"/>
</dbReference>
<dbReference type="InterPro" id="IPR015300">
    <property type="entry name" value="DNA-bd_pseudobarrel_sf"/>
</dbReference>
<dbReference type="InterPro" id="IPR044837">
    <property type="entry name" value="REM16-like"/>
</dbReference>
<dbReference type="PANTHER" id="PTHR31391">
    <property type="entry name" value="B3 DOMAIN-CONTAINING PROTEIN OS11G0197600-RELATED"/>
    <property type="match status" value="1"/>
</dbReference>
<dbReference type="PANTHER" id="PTHR31391:SF140">
    <property type="entry name" value="B3 DOMAIN-CONTAINING PROTEIN OS12G0591400"/>
    <property type="match status" value="1"/>
</dbReference>
<dbReference type="Pfam" id="PF02362">
    <property type="entry name" value="B3"/>
    <property type="match status" value="4"/>
</dbReference>
<dbReference type="SMART" id="SM01019">
    <property type="entry name" value="B3"/>
    <property type="match status" value="4"/>
</dbReference>
<dbReference type="SUPFAM" id="SSF101936">
    <property type="entry name" value="DNA-binding pseudobarrel domain"/>
    <property type="match status" value="4"/>
</dbReference>
<dbReference type="PROSITE" id="PS50863">
    <property type="entry name" value="B3"/>
    <property type="match status" value="4"/>
</dbReference>
<accession>Q2QMT7</accession>
<reference key="1">
    <citation type="journal article" date="2005" name="BMC Biol.">
        <title>The sequence of rice chromosomes 11 and 12, rich in disease resistance genes and recent gene duplications.</title>
        <authorList>
            <consortium name="The rice chromosomes 11 and 12 sequencing consortia"/>
        </authorList>
    </citation>
    <scope>NUCLEOTIDE SEQUENCE [LARGE SCALE GENOMIC DNA]</scope>
    <source>
        <strain>cv. Nipponbare</strain>
    </source>
</reference>
<reference key="2">
    <citation type="journal article" date="2005" name="Nature">
        <title>The map-based sequence of the rice genome.</title>
        <authorList>
            <consortium name="International rice genome sequencing project (IRGSP)"/>
        </authorList>
    </citation>
    <scope>NUCLEOTIDE SEQUENCE [LARGE SCALE GENOMIC DNA]</scope>
    <source>
        <strain>cv. Nipponbare</strain>
    </source>
</reference>
<reference key="3">
    <citation type="journal article" date="2008" name="Nucleic Acids Res.">
        <title>The rice annotation project database (RAP-DB): 2008 update.</title>
        <authorList>
            <consortium name="The rice annotation project (RAP)"/>
        </authorList>
    </citation>
    <scope>GENOME REANNOTATION</scope>
    <source>
        <strain>cv. Nipponbare</strain>
    </source>
</reference>
<reference key="4">
    <citation type="journal article" date="2013" name="Rice">
        <title>Improvement of the Oryza sativa Nipponbare reference genome using next generation sequence and optical map data.</title>
        <authorList>
            <person name="Kawahara Y."/>
            <person name="de la Bastide M."/>
            <person name="Hamilton J.P."/>
            <person name="Kanamori H."/>
            <person name="McCombie W.R."/>
            <person name="Ouyang S."/>
            <person name="Schwartz D.C."/>
            <person name="Tanaka T."/>
            <person name="Wu J."/>
            <person name="Zhou S."/>
            <person name="Childs K.L."/>
            <person name="Davidson R.M."/>
            <person name="Lin H."/>
            <person name="Quesada-Ocampo L."/>
            <person name="Vaillancourt B."/>
            <person name="Sakai H."/>
            <person name="Lee S.S."/>
            <person name="Kim J."/>
            <person name="Numa H."/>
            <person name="Itoh T."/>
            <person name="Buell C.R."/>
            <person name="Matsumoto T."/>
        </authorList>
    </citation>
    <scope>GENOME REANNOTATION</scope>
    <source>
        <strain>cv. Nipponbare</strain>
    </source>
</reference>
<sequence length="661" mass="75285">MGDQKRSFINVMIGDFVAVPTKFANFIRGQISEVVKLEVPNGKTYDVQVAKEHNELVLRSGWGAFARDYELKQCDILVFAYSGSSRFKVRIFNPSGCEKELSCVMMNNTPCGHEGSMSYHDNHLQSPSESSSFFNISLPPHSPFQELSGVDSTSLLVSDPPNMQQFCLRCSWTNPKRLAKPSLAIASLSHQHLAFDKTRCMFILKIENDTLKTILKMFAKNVQGLISGVAKLEVPDGKTYDVEISKEHNELVFRSGWEVFAIAYELEQGDILAFGYSGNSHFKVQIFNPSNCEKELSCVVMNRSISDDNHRQSPRRERMNKPSTTCMDCITNHYWLHMDDRERYFFKVMMSVSDIKDELAIPKKFAANVRGKIPEQVRLEVSDDVPSSEDIKDPMSSGGLQKSKKSCYVLPMLYNMTSAQESEVLALEKKIQPQIPLYITAMDKTSVASGSLVFCKDYAVRYLLDQNRTIKLCQSGGSKTWDISLDMDTDDLYALSTGWLDFFRCNLLQEGDICVFEASKSKRGVALTFHPFKESHCPKSSEYTLSTKSPTRRVPKRDYFATNLTNLTDQQERKCFSVKYASKYLPHKDQNMRLRLPETKYKCKAALHIDTSTNLHKLLKGWGKFVNDNKLEIHDICLFQLMKNKKKLTMTVHIIRKGECS</sequence>